<feature type="chain" id="PRO_1000050779" description="Large ribosomal subunit protein bL35">
    <location>
        <begin position="1"/>
        <end position="63"/>
    </location>
</feature>
<proteinExistence type="inferred from homology"/>
<keyword id="KW-0687">Ribonucleoprotein</keyword>
<keyword id="KW-0689">Ribosomal protein</keyword>
<accession>A6Q692</accession>
<organism>
    <name type="scientific">Sulfurovum sp. (strain NBC37-1)</name>
    <dbReference type="NCBI Taxonomy" id="387093"/>
    <lineage>
        <taxon>Bacteria</taxon>
        <taxon>Pseudomonadati</taxon>
        <taxon>Campylobacterota</taxon>
        <taxon>Epsilonproteobacteria</taxon>
        <taxon>Campylobacterales</taxon>
        <taxon>Sulfurovaceae</taxon>
        <taxon>Sulfurovum</taxon>
    </lineage>
</organism>
<dbReference type="EMBL" id="AP009179">
    <property type="protein sequence ID" value="BAF71001.1"/>
    <property type="molecule type" value="Genomic_DNA"/>
</dbReference>
<dbReference type="RefSeq" id="WP_011979734.1">
    <property type="nucleotide sequence ID" value="NC_009663.1"/>
</dbReference>
<dbReference type="SMR" id="A6Q692"/>
<dbReference type="STRING" id="387093.SUN_0041"/>
<dbReference type="KEGG" id="sun:SUN_0041"/>
<dbReference type="eggNOG" id="COG0291">
    <property type="taxonomic scope" value="Bacteria"/>
</dbReference>
<dbReference type="HOGENOM" id="CLU_169643_4_3_7"/>
<dbReference type="OrthoDB" id="9804851at2"/>
<dbReference type="Proteomes" id="UP000006378">
    <property type="component" value="Chromosome"/>
</dbReference>
<dbReference type="GO" id="GO:0022625">
    <property type="term" value="C:cytosolic large ribosomal subunit"/>
    <property type="evidence" value="ECO:0007669"/>
    <property type="project" value="TreeGrafter"/>
</dbReference>
<dbReference type="GO" id="GO:0003735">
    <property type="term" value="F:structural constituent of ribosome"/>
    <property type="evidence" value="ECO:0007669"/>
    <property type="project" value="InterPro"/>
</dbReference>
<dbReference type="GO" id="GO:0006412">
    <property type="term" value="P:translation"/>
    <property type="evidence" value="ECO:0007669"/>
    <property type="project" value="UniProtKB-UniRule"/>
</dbReference>
<dbReference type="FunFam" id="4.10.410.60:FF:000001">
    <property type="entry name" value="50S ribosomal protein L35"/>
    <property type="match status" value="1"/>
</dbReference>
<dbReference type="Gene3D" id="4.10.410.60">
    <property type="match status" value="1"/>
</dbReference>
<dbReference type="HAMAP" id="MF_00514">
    <property type="entry name" value="Ribosomal_bL35"/>
    <property type="match status" value="1"/>
</dbReference>
<dbReference type="InterPro" id="IPR001706">
    <property type="entry name" value="Ribosomal_bL35"/>
</dbReference>
<dbReference type="InterPro" id="IPR021137">
    <property type="entry name" value="Ribosomal_bL35-like"/>
</dbReference>
<dbReference type="InterPro" id="IPR018265">
    <property type="entry name" value="Ribosomal_bL35_CS"/>
</dbReference>
<dbReference type="InterPro" id="IPR037229">
    <property type="entry name" value="Ribosomal_bL35_sf"/>
</dbReference>
<dbReference type="NCBIfam" id="TIGR00001">
    <property type="entry name" value="rpmI_bact"/>
    <property type="match status" value="1"/>
</dbReference>
<dbReference type="PANTHER" id="PTHR33343">
    <property type="entry name" value="54S RIBOSOMAL PROTEIN BL35M"/>
    <property type="match status" value="1"/>
</dbReference>
<dbReference type="PANTHER" id="PTHR33343:SF1">
    <property type="entry name" value="LARGE RIBOSOMAL SUBUNIT PROTEIN BL35M"/>
    <property type="match status" value="1"/>
</dbReference>
<dbReference type="Pfam" id="PF01632">
    <property type="entry name" value="Ribosomal_L35p"/>
    <property type="match status" value="1"/>
</dbReference>
<dbReference type="PRINTS" id="PR00064">
    <property type="entry name" value="RIBOSOMALL35"/>
</dbReference>
<dbReference type="SUPFAM" id="SSF143034">
    <property type="entry name" value="L35p-like"/>
    <property type="match status" value="1"/>
</dbReference>
<dbReference type="PROSITE" id="PS00936">
    <property type="entry name" value="RIBOSOMAL_L35"/>
    <property type="match status" value="1"/>
</dbReference>
<protein>
    <recommendedName>
        <fullName evidence="1">Large ribosomal subunit protein bL35</fullName>
    </recommendedName>
    <alternativeName>
        <fullName evidence="2">50S ribosomal protein L35</fullName>
    </alternativeName>
</protein>
<gene>
    <name evidence="1" type="primary">rpmI</name>
    <name type="ordered locus">SUN_0041</name>
</gene>
<sequence>MPKMKSVKGAVKRFKVKKSGKIKRGTAYRSHILTKVDGKHHRQMRSSKHVDTVDAKNIKEMIN</sequence>
<comment type="similarity">
    <text evidence="1">Belongs to the bacterial ribosomal protein bL35 family.</text>
</comment>
<name>RL35_SULNB</name>
<evidence type="ECO:0000255" key="1">
    <source>
        <dbReference type="HAMAP-Rule" id="MF_00514"/>
    </source>
</evidence>
<evidence type="ECO:0000305" key="2"/>
<reference key="1">
    <citation type="journal article" date="2007" name="Proc. Natl. Acad. Sci. U.S.A.">
        <title>Deep-sea vent epsilon-proteobacterial genomes provide insights into emergence of pathogens.</title>
        <authorList>
            <person name="Nakagawa S."/>
            <person name="Takaki Y."/>
            <person name="Shimamura S."/>
            <person name="Reysenbach A.-L."/>
            <person name="Takai K."/>
            <person name="Horikoshi K."/>
        </authorList>
    </citation>
    <scope>NUCLEOTIDE SEQUENCE [LARGE SCALE GENOMIC DNA]</scope>
    <source>
        <strain>NBC37-1</strain>
    </source>
</reference>